<reference key="1">
    <citation type="journal article" date="2018" name="Angew. Chem. Int. Ed.">
        <title>Genome mining and comparative biosynthesis of meroterpenoids from two phylogenetically distinct fungi.</title>
        <authorList>
            <person name="Zhang X."/>
            <person name="Wang T.T."/>
            <person name="Xu Q.L."/>
            <person name="Xiong Y."/>
            <person name="Zhang L."/>
            <person name="Han H."/>
            <person name="Xu K."/>
            <person name="Guo W.J."/>
            <person name="Xu Q."/>
            <person name="Tan R.X."/>
            <person name="Ge H.M."/>
        </authorList>
    </citation>
    <scope>NUCLEOTIDE SEQUENCE [MRNA]</scope>
    <scope>FUNCTION</scope>
    <scope>PATHWAY</scope>
    <source>
        <strain>NF2194</strain>
    </source>
</reference>
<keyword id="KW-0325">Glycoprotein</keyword>
<keyword id="KW-0472">Membrane</keyword>
<keyword id="KW-0808">Transferase</keyword>
<keyword id="KW-0812">Transmembrane</keyword>
<keyword id="KW-1133">Transmembrane helix</keyword>
<organism>
    <name type="scientific">Arthrinium sp</name>
    <dbReference type="NCBI Taxonomy" id="1756131"/>
    <lineage>
        <taxon>Eukaryota</taxon>
        <taxon>Fungi</taxon>
        <taxon>Dikarya</taxon>
        <taxon>Ascomycota</taxon>
        <taxon>Pezizomycotina</taxon>
        <taxon>Sordariomycetes</taxon>
        <taxon>Xylariomycetidae</taxon>
        <taxon>Amphisphaeriales</taxon>
        <taxon>Apiosporaceae</taxon>
        <taxon>Arthrinium</taxon>
    </lineage>
</organism>
<accession>A0A455LM26</accession>
<gene>
    <name evidence="4" type="primary">atnC</name>
</gene>
<name>ATNC_ARTSZ</name>
<comment type="function">
    <text evidence="3 6">Acetyltransferase; part of the gene cluster that mediates the biosynthesis of the meroterpenoids arthripenoids (PubMed:29797385). The pathway begins with the HR-PKS atnH that catalyzes two chain-extension steps to form a reduced triketide, which then primes the SAT domain in the NR-PKS atnG to initiate three more cycles of extension to give a linear hexaketide corresponding to the polyketide part of arthripenoids (PubMed:29797385). The FAD-dependent monooxygenase atnJ then performs an oxidative decarboxylation at C11 of the atnH/atnG product, via an electrophilic aromatic hydroxylation with concomitant ipso-decarboxylation (PubMed:29797385). The membrane-bound polyprenyl transferase atnF then introduces a farnesyl group before the FAD-dependent monooxygenase atnK functions as the first epoxidase on terminal C12'-C13' olefin, followed by a second epoxidation on C7'-C8' catalyzed by atnA (PubMed:29797385). The terpene cyclase/mutase atnI then initiates the sequential tricyclic ring formation through protonation of the terminal epoxide and catalyzes the regioselective and stereoselective 6/6/6-tricyclic ring formation (PubMed:29797385). The cytochrome P450 monooxygenase atnM is responsible for hydroxylating both C1' and C10' (Probable). The next steps may involve ketoreduction and acetyl transfer by the ketoreductase atnB and the acetyltransferase atnC, and lead to the production of arthripenoid B, the final biosynthetic product of the atn cluster (PubMed:29797385). The hydroquinone moiety in arthripenoid B is prone to undergo spontaneous oxidation to afford a benzoquinone compound, a key intermediate for generating structure diversity (Probable). For instance, addition of a cysteine followed by ring contraction gives arthripenoid A, tautomerization gives the main product arthripenoid C, addition of a molecular of water or amine affords arthripenoid D or E, respectively, and loss of one water forms arthripenoid F (Probable).</text>
</comment>
<comment type="pathway">
    <text evidence="3">Secondary metabolite biosynthesis; terpenoid biosynthesis.</text>
</comment>
<comment type="subcellular location">
    <subcellularLocation>
        <location evidence="1">Membrane</location>
        <topology evidence="1">Multi-pass membrane protein</topology>
    </subcellularLocation>
</comment>
<comment type="similarity">
    <text evidence="5">Belongs to the wax synthase family.</text>
</comment>
<dbReference type="EC" id="2.3.1.-" evidence="6"/>
<dbReference type="EMBL" id="MH183009">
    <property type="protein sequence ID" value="AYO60876.1"/>
    <property type="molecule type" value="mRNA"/>
</dbReference>
<dbReference type="GlyCosmos" id="A0A455LM26">
    <property type="glycosylation" value="2 sites, No reported glycans"/>
</dbReference>
<dbReference type="UniPathway" id="UPA00213"/>
<dbReference type="GO" id="GO:0016020">
    <property type="term" value="C:membrane"/>
    <property type="evidence" value="ECO:0007669"/>
    <property type="project" value="UniProtKB-SubCell"/>
</dbReference>
<dbReference type="GO" id="GO:0008374">
    <property type="term" value="F:O-acyltransferase activity"/>
    <property type="evidence" value="ECO:0007669"/>
    <property type="project" value="InterPro"/>
</dbReference>
<dbReference type="GO" id="GO:0016114">
    <property type="term" value="P:terpenoid biosynthetic process"/>
    <property type="evidence" value="ECO:0007669"/>
    <property type="project" value="UniProtKB-UniPathway"/>
</dbReference>
<dbReference type="InterPro" id="IPR044851">
    <property type="entry name" value="Wax_synthase"/>
</dbReference>
<dbReference type="InterPro" id="IPR032805">
    <property type="entry name" value="Wax_synthase_dom"/>
</dbReference>
<dbReference type="PANTHER" id="PTHR31595">
    <property type="entry name" value="LONG-CHAIN-ALCOHOL O-FATTY-ACYLTRANSFERASE 3-RELATED"/>
    <property type="match status" value="1"/>
</dbReference>
<dbReference type="PANTHER" id="PTHR31595:SF27">
    <property type="entry name" value="WAX SYNTHASE DOMAIN-CONTAINING PROTEIN-RELATED"/>
    <property type="match status" value="1"/>
</dbReference>
<dbReference type="Pfam" id="PF13813">
    <property type="entry name" value="MBOAT_2"/>
    <property type="match status" value="1"/>
</dbReference>
<feature type="chain" id="PRO_0000452562" description="Acetyltransferase atnC">
    <location>
        <begin position="1"/>
        <end position="435"/>
    </location>
</feature>
<feature type="transmembrane region" description="Helical" evidence="1">
    <location>
        <begin position="10"/>
        <end position="30"/>
    </location>
</feature>
<feature type="transmembrane region" description="Helical" evidence="1">
    <location>
        <begin position="40"/>
        <end position="60"/>
    </location>
</feature>
<feature type="transmembrane region" description="Helical" evidence="1">
    <location>
        <begin position="68"/>
        <end position="88"/>
    </location>
</feature>
<feature type="transmembrane region" description="Helical" evidence="1">
    <location>
        <begin position="306"/>
        <end position="326"/>
    </location>
</feature>
<feature type="transmembrane region" description="Helical" evidence="1">
    <location>
        <begin position="333"/>
        <end position="353"/>
    </location>
</feature>
<feature type="transmembrane region" description="Helical" evidence="1">
    <location>
        <begin position="370"/>
        <end position="390"/>
    </location>
</feature>
<feature type="transmembrane region" description="Helical" evidence="1">
    <location>
        <begin position="407"/>
        <end position="427"/>
    </location>
</feature>
<feature type="glycosylation site" description="N-linked (GlcNAc...) asparagine" evidence="2">
    <location>
        <position position="203"/>
    </location>
</feature>
<feature type="glycosylation site" description="N-linked (GlcNAc...) asparagine" evidence="2">
    <location>
        <position position="406"/>
    </location>
</feature>
<sequence length="435" mass="49163">MALVNNPIQAFANVALLFAVQILIPAFLIITTPKYSWLRYFGIPCIAFPAYLIFQLAPTLSNSIFHNSFLACEGILVVAHCVNLLLILQDGGLTWSDLRRSGVAGEKSETPPDATFLRKLISAVRLVVSLRGVDTPWEAKNTPPHPSSLGPGGGSRASFLIRQGAILAWQYLFLDVLLEVTKQEPPENTDKFYRPGMEYEYLNLTAEERFIRAFMPFVSWFVVSRLLLDSTWRALSILFVASGLGSPQSWRPLFGSMWDAYTLRNFWGKFWHQILRWPFTSNVNFLTRRVVKLPVPSLLDRYTNNFLVFLLSGILHAVSANIMGLSAVESGSIPYFSSFALGMMLEDGVQAFYNRLHADKERKTGIWKKVVGFIWVVFWMSLTSPWYMFPSRRKVAGEAAWVLPFNLTEVIGMPMMWGLLGTFGMLVKWAFGTSL</sequence>
<protein>
    <recommendedName>
        <fullName evidence="4">Acetyltransferase atnC</fullName>
        <ecNumber evidence="6">2.3.1.-</ecNumber>
    </recommendedName>
    <alternativeName>
        <fullName evidence="4">Arthripenoid biosynthesis cluster protein C</fullName>
    </alternativeName>
</protein>
<proteinExistence type="evidence at transcript level"/>
<evidence type="ECO:0000255" key="1"/>
<evidence type="ECO:0000255" key="2">
    <source>
        <dbReference type="PROSITE-ProRule" id="PRU00498"/>
    </source>
</evidence>
<evidence type="ECO:0000269" key="3">
    <source>
    </source>
</evidence>
<evidence type="ECO:0000303" key="4">
    <source>
    </source>
</evidence>
<evidence type="ECO:0000305" key="5"/>
<evidence type="ECO:0000305" key="6">
    <source>
    </source>
</evidence>